<feature type="chain" id="PRO_0000419460" description="Thiosulfate sulfurtransferase/rhodanese-like domain-containing protein 3">
    <location>
        <begin position="1"/>
        <end position="97"/>
    </location>
</feature>
<feature type="domain" description="Rhodanese">
    <location>
        <begin position="32"/>
        <end position="84"/>
    </location>
</feature>
<feature type="modified residue" description="N6-succinyllysine" evidence="1">
    <location>
        <position position="84"/>
    </location>
</feature>
<sequence>MKIEKCGWSEGLTSIKGNCHNFYTAISKDVTYKELKNLLNSKNIMLIDVREIWEILEYQKIPESINVPLDEVGEALQMNPRDFKEKYNEVKPSKSDS</sequence>
<proteinExistence type="inferred from homology"/>
<evidence type="ECO:0000250" key="1">
    <source>
        <dbReference type="UniProtKB" id="Q9D0B5"/>
    </source>
</evidence>
<keyword id="KW-1185">Reference proteome</keyword>
<dbReference type="EMBL" id="AL137784">
    <property type="status" value="NOT_ANNOTATED_CDS"/>
    <property type="molecule type" value="Genomic_DNA"/>
</dbReference>
<dbReference type="EMBL" id="CH471051">
    <property type="protein sequence ID" value="EAW48463.1"/>
    <property type="molecule type" value="Genomic_DNA"/>
</dbReference>
<dbReference type="EMBL" id="CH471051">
    <property type="protein sequence ID" value="EAW48464.1"/>
    <property type="molecule type" value="Genomic_DNA"/>
</dbReference>
<dbReference type="EMBL" id="BC047952">
    <property type="status" value="NOT_ANNOTATED_CDS"/>
    <property type="molecule type" value="mRNA"/>
</dbReference>
<dbReference type="RefSeq" id="NP_001182060.1">
    <property type="nucleotide sequence ID" value="NM_001195131.1"/>
</dbReference>
<dbReference type="RefSeq" id="XP_016865630.1">
    <property type="nucleotide sequence ID" value="XM_017010141.1"/>
</dbReference>
<dbReference type="SMR" id="H0UI37"/>
<dbReference type="FunCoup" id="H0UI37">
    <property type="interactions" value="14"/>
</dbReference>
<dbReference type="STRING" id="9606.ENSP00000489733"/>
<dbReference type="iPTMnet" id="H0UI37"/>
<dbReference type="PhosphoSitePlus" id="H0UI37"/>
<dbReference type="BioMuta" id="TSTD3"/>
<dbReference type="Antibodypedia" id="81155">
    <property type="antibodies" value="5 antibodies from 1 providers"/>
</dbReference>
<dbReference type="DNASU" id="100130890"/>
<dbReference type="Ensembl" id="ENST00000452647.3">
    <property type="protein sequence ID" value="ENSP00000489733.1"/>
    <property type="gene ID" value="ENSG00000279170.3"/>
</dbReference>
<dbReference type="AGR" id="HGNC:40910"/>
<dbReference type="DisGeNET" id="100130890"/>
<dbReference type="GeneCards" id="TSTD3"/>
<dbReference type="HGNC" id="HGNC:40910">
    <property type="gene designation" value="TSTD3"/>
</dbReference>
<dbReference type="HPA" id="ENSG00000279170">
    <property type="expression patterns" value="Low tissue specificity"/>
</dbReference>
<dbReference type="MalaCards" id="TSTD3"/>
<dbReference type="neXtProt" id="NX_H0UI37"/>
<dbReference type="VEuPathDB" id="HostDB:ENSG00000279170"/>
<dbReference type="GeneTree" id="ENSGT00940000164932"/>
<dbReference type="InParanoid" id="H0UI37"/>
<dbReference type="OrthoDB" id="566238at2759"/>
<dbReference type="PAN-GO" id="H0UI37">
    <property type="GO annotations" value="0 GO annotations based on evolutionary models"/>
</dbReference>
<dbReference type="PathwayCommons" id="H0UI37"/>
<dbReference type="BioGRID-ORCS" id="100130890">
    <property type="hits" value="4 hits in 209 CRISPR screens"/>
</dbReference>
<dbReference type="ChiTaRS" id="TSTD3">
    <property type="organism name" value="human"/>
</dbReference>
<dbReference type="GenomeRNAi" id="100130890"/>
<dbReference type="Pharos" id="H0UI37">
    <property type="development level" value="Tdark"/>
</dbReference>
<dbReference type="PRO" id="PR:H0UI37"/>
<dbReference type="Proteomes" id="UP000005640">
    <property type="component" value="Chromosome 6"/>
</dbReference>
<dbReference type="RNAct" id="H0UI37">
    <property type="molecule type" value="protein"/>
</dbReference>
<dbReference type="Bgee" id="ENSG00000279170">
    <property type="expression patterns" value="Expressed in calcaneal tendon and 94 other cell types or tissues"/>
</dbReference>
<dbReference type="ExpressionAtlas" id="H0UI37">
    <property type="expression patterns" value="baseline and differential"/>
</dbReference>
<dbReference type="Gene3D" id="3.40.250.10">
    <property type="entry name" value="Rhodanese-like domain"/>
    <property type="match status" value="1"/>
</dbReference>
<dbReference type="InterPro" id="IPR001763">
    <property type="entry name" value="Rhodanese-like_dom"/>
</dbReference>
<dbReference type="InterPro" id="IPR036873">
    <property type="entry name" value="Rhodanese-like_dom_sf"/>
</dbReference>
<dbReference type="PANTHER" id="PTHR44086">
    <property type="entry name" value="THIOSULFATE SULFURTRANSFERASE RDL2, MITOCHONDRIAL-RELATED"/>
    <property type="match status" value="1"/>
</dbReference>
<dbReference type="PANTHER" id="PTHR44086:SF10">
    <property type="entry name" value="THIOSULFATE SULFURTRANSFERASE_RHODANESE-LIKE DOMAIN-CONTAINING PROTEIN 3"/>
    <property type="match status" value="1"/>
</dbReference>
<dbReference type="Pfam" id="PF00581">
    <property type="entry name" value="Rhodanese"/>
    <property type="match status" value="1"/>
</dbReference>
<dbReference type="SUPFAM" id="SSF52821">
    <property type="entry name" value="Rhodanese/Cell cycle control phosphatase"/>
    <property type="match status" value="1"/>
</dbReference>
<accession>H0UI37</accession>
<name>TSTD3_HUMAN</name>
<organism>
    <name type="scientific">Homo sapiens</name>
    <name type="common">Human</name>
    <dbReference type="NCBI Taxonomy" id="9606"/>
    <lineage>
        <taxon>Eukaryota</taxon>
        <taxon>Metazoa</taxon>
        <taxon>Chordata</taxon>
        <taxon>Craniata</taxon>
        <taxon>Vertebrata</taxon>
        <taxon>Euteleostomi</taxon>
        <taxon>Mammalia</taxon>
        <taxon>Eutheria</taxon>
        <taxon>Euarchontoglires</taxon>
        <taxon>Primates</taxon>
        <taxon>Haplorrhini</taxon>
        <taxon>Catarrhini</taxon>
        <taxon>Hominidae</taxon>
        <taxon>Homo</taxon>
    </lineage>
</organism>
<gene>
    <name type="primary">TSTD3</name>
</gene>
<reference key="1">
    <citation type="journal article" date="2003" name="Nature">
        <title>The DNA sequence and analysis of human chromosome 6.</title>
        <authorList>
            <person name="Mungall A.J."/>
            <person name="Palmer S.A."/>
            <person name="Sims S.K."/>
            <person name="Edwards C.A."/>
            <person name="Ashurst J.L."/>
            <person name="Wilming L."/>
            <person name="Jones M.C."/>
            <person name="Horton R."/>
            <person name="Hunt S.E."/>
            <person name="Scott C.E."/>
            <person name="Gilbert J.G.R."/>
            <person name="Clamp M.E."/>
            <person name="Bethel G."/>
            <person name="Milne S."/>
            <person name="Ainscough R."/>
            <person name="Almeida J.P."/>
            <person name="Ambrose K.D."/>
            <person name="Andrews T.D."/>
            <person name="Ashwell R.I.S."/>
            <person name="Babbage A.K."/>
            <person name="Bagguley C.L."/>
            <person name="Bailey J."/>
            <person name="Banerjee R."/>
            <person name="Barker D.J."/>
            <person name="Barlow K.F."/>
            <person name="Bates K."/>
            <person name="Beare D.M."/>
            <person name="Beasley H."/>
            <person name="Beasley O."/>
            <person name="Bird C.P."/>
            <person name="Blakey S.E."/>
            <person name="Bray-Allen S."/>
            <person name="Brook J."/>
            <person name="Brown A.J."/>
            <person name="Brown J.Y."/>
            <person name="Burford D.C."/>
            <person name="Burrill W."/>
            <person name="Burton J."/>
            <person name="Carder C."/>
            <person name="Carter N.P."/>
            <person name="Chapman J.C."/>
            <person name="Clark S.Y."/>
            <person name="Clark G."/>
            <person name="Clee C.M."/>
            <person name="Clegg S."/>
            <person name="Cobley V."/>
            <person name="Collier R.E."/>
            <person name="Collins J.E."/>
            <person name="Colman L.K."/>
            <person name="Corby N.R."/>
            <person name="Coville G.J."/>
            <person name="Culley K.M."/>
            <person name="Dhami P."/>
            <person name="Davies J."/>
            <person name="Dunn M."/>
            <person name="Earthrowl M.E."/>
            <person name="Ellington A.E."/>
            <person name="Evans K.A."/>
            <person name="Faulkner L."/>
            <person name="Francis M.D."/>
            <person name="Frankish A."/>
            <person name="Frankland J."/>
            <person name="French L."/>
            <person name="Garner P."/>
            <person name="Garnett J."/>
            <person name="Ghori M.J."/>
            <person name="Gilby L.M."/>
            <person name="Gillson C.J."/>
            <person name="Glithero R.J."/>
            <person name="Grafham D.V."/>
            <person name="Grant M."/>
            <person name="Gribble S."/>
            <person name="Griffiths C."/>
            <person name="Griffiths M.N.D."/>
            <person name="Hall R."/>
            <person name="Halls K.S."/>
            <person name="Hammond S."/>
            <person name="Harley J.L."/>
            <person name="Hart E.A."/>
            <person name="Heath P.D."/>
            <person name="Heathcott R."/>
            <person name="Holmes S.J."/>
            <person name="Howden P.J."/>
            <person name="Howe K.L."/>
            <person name="Howell G.R."/>
            <person name="Huckle E."/>
            <person name="Humphray S.J."/>
            <person name="Humphries M.D."/>
            <person name="Hunt A.R."/>
            <person name="Johnson C.M."/>
            <person name="Joy A.A."/>
            <person name="Kay M."/>
            <person name="Keenan S.J."/>
            <person name="Kimberley A.M."/>
            <person name="King A."/>
            <person name="Laird G.K."/>
            <person name="Langford C."/>
            <person name="Lawlor S."/>
            <person name="Leongamornlert D.A."/>
            <person name="Leversha M."/>
            <person name="Lloyd C.R."/>
            <person name="Lloyd D.M."/>
            <person name="Loveland J.E."/>
            <person name="Lovell J."/>
            <person name="Martin S."/>
            <person name="Mashreghi-Mohammadi M."/>
            <person name="Maslen G.L."/>
            <person name="Matthews L."/>
            <person name="McCann O.T."/>
            <person name="McLaren S.J."/>
            <person name="McLay K."/>
            <person name="McMurray A."/>
            <person name="Moore M.J.F."/>
            <person name="Mullikin J.C."/>
            <person name="Niblett D."/>
            <person name="Nickerson T."/>
            <person name="Novik K.L."/>
            <person name="Oliver K."/>
            <person name="Overton-Larty E.K."/>
            <person name="Parker A."/>
            <person name="Patel R."/>
            <person name="Pearce A.V."/>
            <person name="Peck A.I."/>
            <person name="Phillimore B.J.C.T."/>
            <person name="Phillips S."/>
            <person name="Plumb R.W."/>
            <person name="Porter K.M."/>
            <person name="Ramsey Y."/>
            <person name="Ranby S.A."/>
            <person name="Rice C.M."/>
            <person name="Ross M.T."/>
            <person name="Searle S.M."/>
            <person name="Sehra H.K."/>
            <person name="Sheridan E."/>
            <person name="Skuce C.D."/>
            <person name="Smith S."/>
            <person name="Smith M."/>
            <person name="Spraggon L."/>
            <person name="Squares S.L."/>
            <person name="Steward C.A."/>
            <person name="Sycamore N."/>
            <person name="Tamlyn-Hall G."/>
            <person name="Tester J."/>
            <person name="Theaker A.J."/>
            <person name="Thomas D.W."/>
            <person name="Thorpe A."/>
            <person name="Tracey A."/>
            <person name="Tromans A."/>
            <person name="Tubby B."/>
            <person name="Wall M."/>
            <person name="Wallis J.M."/>
            <person name="West A.P."/>
            <person name="White S.S."/>
            <person name="Whitehead S.L."/>
            <person name="Whittaker H."/>
            <person name="Wild A."/>
            <person name="Willey D.J."/>
            <person name="Wilmer T.E."/>
            <person name="Wood J.M."/>
            <person name="Wray P.W."/>
            <person name="Wyatt J.C."/>
            <person name="Young L."/>
            <person name="Younger R.M."/>
            <person name="Bentley D.R."/>
            <person name="Coulson A."/>
            <person name="Durbin R.M."/>
            <person name="Hubbard T."/>
            <person name="Sulston J.E."/>
            <person name="Dunham I."/>
            <person name="Rogers J."/>
            <person name="Beck S."/>
        </authorList>
    </citation>
    <scope>NUCLEOTIDE SEQUENCE [LARGE SCALE GENOMIC DNA]</scope>
</reference>
<reference key="2">
    <citation type="submission" date="2005-09" db="EMBL/GenBank/DDBJ databases">
        <authorList>
            <person name="Mural R.J."/>
            <person name="Istrail S."/>
            <person name="Sutton G.G."/>
            <person name="Florea L."/>
            <person name="Halpern A.L."/>
            <person name="Mobarry C.M."/>
            <person name="Lippert R."/>
            <person name="Walenz B."/>
            <person name="Shatkay H."/>
            <person name="Dew I."/>
            <person name="Miller J.R."/>
            <person name="Flanigan M.J."/>
            <person name="Edwards N.J."/>
            <person name="Bolanos R."/>
            <person name="Fasulo D."/>
            <person name="Halldorsson B.V."/>
            <person name="Hannenhalli S."/>
            <person name="Turner R."/>
            <person name="Yooseph S."/>
            <person name="Lu F."/>
            <person name="Nusskern D.R."/>
            <person name="Shue B.C."/>
            <person name="Zheng X.H."/>
            <person name="Zhong F."/>
            <person name="Delcher A.L."/>
            <person name="Huson D.H."/>
            <person name="Kravitz S.A."/>
            <person name="Mouchard L."/>
            <person name="Reinert K."/>
            <person name="Remington K.A."/>
            <person name="Clark A.G."/>
            <person name="Waterman M.S."/>
            <person name="Eichler E.E."/>
            <person name="Adams M.D."/>
            <person name="Hunkapiller M.W."/>
            <person name="Myers E.W."/>
            <person name="Venter J.C."/>
        </authorList>
    </citation>
    <scope>NUCLEOTIDE SEQUENCE [LARGE SCALE GENOMIC DNA]</scope>
</reference>
<reference key="3">
    <citation type="journal article" date="2004" name="Genome Res.">
        <title>The status, quality, and expansion of the NIH full-length cDNA project: the Mammalian Gene Collection (MGC).</title>
        <authorList>
            <consortium name="The MGC Project Team"/>
        </authorList>
    </citation>
    <scope>NUCLEOTIDE SEQUENCE [LARGE SCALE MRNA]</scope>
    <source>
        <tissue>Uterus</tissue>
    </source>
</reference>
<protein>
    <recommendedName>
        <fullName>Thiosulfate sulfurtransferase/rhodanese-like domain-containing protein 3</fullName>
    </recommendedName>
    <alternativeName>
        <fullName>Rhodanese domain-containing protein 3</fullName>
    </alternativeName>
</protein>